<comment type="function">
    <text evidence="1">Component of the cytochrome b6-f complex, which mediates electron transfer between photosystem II (PSII) and photosystem I (PSI), cyclic electron flow around PSI, and state transitions. PetL is important for photoautotrophic growth as well as for electron transfer efficiency and stability of the cytochrome b6-f complex.</text>
</comment>
<comment type="subunit">
    <text evidence="1">The 4 large subunits of the cytochrome b6-f complex are cytochrome b6, subunit IV (17 kDa polypeptide, PetD), cytochrome f and the Rieske protein, while the 4 small subunits are PetG, PetL, PetM and PetN. The complex functions as a dimer.</text>
</comment>
<comment type="subcellular location">
    <subcellularLocation>
        <location evidence="1">Plastid</location>
        <location evidence="1">Chloroplast thylakoid membrane</location>
        <topology evidence="1">Single-pass membrane protein</topology>
    </subcellularLocation>
</comment>
<comment type="similarity">
    <text evidence="1">Belongs to the PetL family.</text>
</comment>
<gene>
    <name evidence="1" type="primary">petL</name>
</gene>
<reference key="1">
    <citation type="journal article" date="2000" name="Nature">
        <title>Ancestral chloroplast genome in Mesostigma viride reveals an early branch of green plant evolution.</title>
        <authorList>
            <person name="Lemieux C."/>
            <person name="Otis C."/>
            <person name="Turmel M."/>
        </authorList>
    </citation>
    <scope>NUCLEOTIDE SEQUENCE [LARGE SCALE GENOMIC DNA]</scope>
    <source>
        <strain>NIES-296 / KY-14 / CCMP 2046</strain>
    </source>
</reference>
<feature type="chain" id="PRO_0000220458" description="Cytochrome b6-f complex subunit 6">
    <location>
        <begin position="1"/>
        <end position="31"/>
    </location>
</feature>
<feature type="transmembrane region" description="Helical" evidence="1">
    <location>
        <begin position="4"/>
        <end position="24"/>
    </location>
</feature>
<proteinExistence type="inferred from homology"/>
<geneLocation type="chloroplast"/>
<keyword id="KW-0150">Chloroplast</keyword>
<keyword id="KW-0249">Electron transport</keyword>
<keyword id="KW-0472">Membrane</keyword>
<keyword id="KW-0602">Photosynthesis</keyword>
<keyword id="KW-0934">Plastid</keyword>
<keyword id="KW-0793">Thylakoid</keyword>
<keyword id="KW-0812">Transmembrane</keyword>
<keyword id="KW-1133">Transmembrane helix</keyword>
<keyword id="KW-0813">Transport</keyword>
<accession>Q9MUN4</accession>
<organism>
    <name type="scientific">Mesostigma viride</name>
    <name type="common">Green alga</name>
    <dbReference type="NCBI Taxonomy" id="41882"/>
    <lineage>
        <taxon>Eukaryota</taxon>
        <taxon>Viridiplantae</taxon>
        <taxon>Streptophyta</taxon>
        <taxon>Mesostigmatophyceae</taxon>
        <taxon>Mesostigmatales</taxon>
        <taxon>Mesostigmataceae</taxon>
        <taxon>Mesostigma</taxon>
    </lineage>
</organism>
<evidence type="ECO:0000255" key="1">
    <source>
        <dbReference type="HAMAP-Rule" id="MF_00433"/>
    </source>
</evidence>
<name>PETL_MESVI</name>
<protein>
    <recommendedName>
        <fullName evidence="1">Cytochrome b6-f complex subunit 6</fullName>
    </recommendedName>
    <alternativeName>
        <fullName evidence="1">Cytochrome b6-f complex subunit PetL</fullName>
    </alternativeName>
    <alternativeName>
        <fullName evidence="1">Cytochrome b6-f complex subunit VI</fullName>
    </alternativeName>
</protein>
<dbReference type="EMBL" id="AF166114">
    <property type="protein sequence ID" value="AAF43866.1"/>
    <property type="molecule type" value="Genomic_DNA"/>
</dbReference>
<dbReference type="RefSeq" id="NP_038426.1">
    <property type="nucleotide sequence ID" value="NC_002186.1"/>
</dbReference>
<dbReference type="SMR" id="Q9MUN4"/>
<dbReference type="GeneID" id="800870"/>
<dbReference type="GO" id="GO:0009535">
    <property type="term" value="C:chloroplast thylakoid membrane"/>
    <property type="evidence" value="ECO:0007669"/>
    <property type="project" value="UniProtKB-SubCell"/>
</dbReference>
<dbReference type="GO" id="GO:0009512">
    <property type="term" value="C:cytochrome b6f complex"/>
    <property type="evidence" value="ECO:0007669"/>
    <property type="project" value="InterPro"/>
</dbReference>
<dbReference type="GO" id="GO:0045158">
    <property type="term" value="F:electron transporter, transferring electrons within cytochrome b6/f complex of photosystem II activity"/>
    <property type="evidence" value="ECO:0007669"/>
    <property type="project" value="UniProtKB-UniRule"/>
</dbReference>
<dbReference type="GO" id="GO:0015979">
    <property type="term" value="P:photosynthesis"/>
    <property type="evidence" value="ECO:0007669"/>
    <property type="project" value="UniProtKB-KW"/>
</dbReference>
<dbReference type="HAMAP" id="MF_00433">
    <property type="entry name" value="Cytb6_f_PetL"/>
    <property type="match status" value="1"/>
</dbReference>
<dbReference type="InterPro" id="IPR007802">
    <property type="entry name" value="Cyt_b6/f_cplx_su6"/>
</dbReference>
<sequence>MFTVVSYLGILAAFALVTIGIFLVLRTIQLI</sequence>